<sequence>MTDVVRDFDALYAKLEAPPHNLRLVLECCAPESGPLDLAAIQERKSYTCCALNNRRNCVLHKCVVVVFGTALDARLRAPSAEFDAQNNLRGTFMLDGRFLSFPNIMMNNNVLMHNFYDKLYAKHCKRMFLYGNVDAEKHINRAIQLVYDKATRRLFARDVYASDYVVTDDLNAVLETYLASSGKWRPLDHLFRYSKAHKQQLVDHIKMIMHHDICYSIDNLANKIIYKHAYLMELLLTSTVLQHYQKRAGENEALKRRLECEGEPPASKRRKAQSVLYGKESKKIVDSVVNGRLIYCVSKTFSKQRRSFPNQHDNCSNNNIEISLPVLKYRVGSEVTRITNDSVRQKMLKQKKDFVKFIGSFFHGEMTVAGKKFFLCRNARLPNVDYAMVADKFAELQQFGLVAPVHDLAHCADGALLIAFNDRPTNLQCARADVPKIVYRLKRDRCPIELKASSNILYVNHHEGMVCIAKRVRIGAPVNASINALLTPYEYHYKNSLFHAPTVSACEIEESDDVRCLMSKLEQYYFAEYTHLFYTIPVPKMIVALTNLKNAMPVLRYSTLGTAPVGLSVAVGDHVLMNNKMVKLWTLVRDSKLMTAEDPYIPHMALPIRLYNHKVNKLKGKLALAGKAVPTLKFVASSGPHNCVVLPDNMVQYFAGTVLSGAKIVWAHDGKRCMVEACTNGAHNVYKVYVFFRRTRNQAVESLAASMTLAGDAVIVRTAVVTSTDDLEGVKVCSVHGQKGVLNRSEDLTEWMAEDGTHAQICLSPVSYLSRQSNFERLERKYVVRGGNHADPRARRYPIFNIPYMLFNNTPDNIYKEFNKKNYTGHEKVEGTRFDQWTKNQSFVGNRLAESLQWMRGGSNLPQNCGEFEVVSSLLMCNNVVMK</sequence>
<organism>
    <name type="scientific">Orgyia pseudotsugata multicapsid polyhedrosis virus</name>
    <name type="common">OpMNPV</name>
    <dbReference type="NCBI Taxonomy" id="262177"/>
    <lineage>
        <taxon>Viruses</taxon>
        <taxon>Viruses incertae sedis</taxon>
        <taxon>Naldaviricetes</taxon>
        <taxon>Lefavirales</taxon>
        <taxon>Baculoviridae</taxon>
        <taxon>Alphabaculovirus</taxon>
        <taxon>Alphabaculovirus orpseudotsugatae</taxon>
    </lineage>
</organism>
<keyword id="KW-0240">DNA-directed RNA polymerase</keyword>
<keyword id="KW-0548">Nucleotidyltransferase</keyword>
<keyword id="KW-1185">Reference proteome</keyword>
<keyword id="KW-0804">Transcription</keyword>
<keyword id="KW-0808">Transferase</keyword>
<proteinExistence type="inferred from homology"/>
<name>RPOB_NPVOP</name>
<feature type="chain" id="PRO_0000048054" description="Probable DNA-directed RNA polymerase subunit beta">
    <location>
        <begin position="1"/>
        <end position="884"/>
    </location>
</feature>
<protein>
    <recommendedName>
        <fullName>Probable DNA-directed RNA polymerase subunit beta</fullName>
        <ecNumber>2.7.7.6</ecNumber>
    </recommendedName>
    <alternativeName>
        <fullName>Late expression factor 8</fullName>
    </alternativeName>
</protein>
<reference key="1">
    <citation type="journal article" date="1997" name="Virology">
        <title>The sequence of the Orgyia pseudotsugata multinucleocapsid nuclear polyhedrosis virus genome.</title>
        <authorList>
            <person name="Ahrens C.H."/>
            <person name="Russell R.R."/>
            <person name="Funk C.J."/>
            <person name="Evans J."/>
            <person name="Harwood S."/>
            <person name="Rohrmann G.F."/>
        </authorList>
    </citation>
    <scope>NUCLEOTIDE SEQUENCE [LARGE SCALE GENOMIC DNA]</scope>
</reference>
<dbReference type="EC" id="2.7.7.6"/>
<dbReference type="EMBL" id="U75930">
    <property type="protein sequence ID" value="AAC59053.1"/>
    <property type="molecule type" value="Genomic_DNA"/>
</dbReference>
<dbReference type="RefSeq" id="NP_046210.1">
    <property type="nucleotide sequence ID" value="NC_001875.2"/>
</dbReference>
<dbReference type="KEGG" id="vg:912113"/>
<dbReference type="OrthoDB" id="898at10239"/>
<dbReference type="Proteomes" id="UP000009248">
    <property type="component" value="Genome"/>
</dbReference>
<dbReference type="GO" id="GO:0000428">
    <property type="term" value="C:DNA-directed RNA polymerase complex"/>
    <property type="evidence" value="ECO:0007669"/>
    <property type="project" value="UniProtKB-KW"/>
</dbReference>
<dbReference type="GO" id="GO:0003677">
    <property type="term" value="F:DNA binding"/>
    <property type="evidence" value="ECO:0007669"/>
    <property type="project" value="InterPro"/>
</dbReference>
<dbReference type="GO" id="GO:0003899">
    <property type="term" value="F:DNA-directed RNA polymerase activity"/>
    <property type="evidence" value="ECO:0007669"/>
    <property type="project" value="UniProtKB-EC"/>
</dbReference>
<dbReference type="GO" id="GO:0006351">
    <property type="term" value="P:DNA-templated transcription"/>
    <property type="evidence" value="ECO:0007669"/>
    <property type="project" value="InterPro"/>
</dbReference>
<dbReference type="Gene3D" id="2.40.270.10">
    <property type="entry name" value="DNA-directed RNA polymerase, subunit 2, domain 6"/>
    <property type="match status" value="1"/>
</dbReference>
<dbReference type="InterPro" id="IPR037033">
    <property type="entry name" value="DNA-dir_RNAP_su2_hyb_sf"/>
</dbReference>
<dbReference type="InterPro" id="IPR007025">
    <property type="entry name" value="LEF-8"/>
</dbReference>
<dbReference type="InterPro" id="IPR007121">
    <property type="entry name" value="RNA_pol_bsu_CS"/>
</dbReference>
<dbReference type="Pfam" id="PF04941">
    <property type="entry name" value="LEF-8"/>
    <property type="match status" value="1"/>
</dbReference>
<dbReference type="PROSITE" id="PS01166">
    <property type="entry name" value="RNA_POL_BETA"/>
    <property type="match status" value="1"/>
</dbReference>
<accession>O12934</accession>
<comment type="function">
    <text>Required for late and very late gene expression. May be a component of the novel RNA polymerase activity induced by baculovirus infection.</text>
</comment>
<comment type="catalytic activity">
    <reaction>
        <text>RNA(n) + a ribonucleoside 5'-triphosphate = RNA(n+1) + diphosphate</text>
        <dbReference type="Rhea" id="RHEA:21248"/>
        <dbReference type="Rhea" id="RHEA-COMP:14527"/>
        <dbReference type="Rhea" id="RHEA-COMP:17342"/>
        <dbReference type="ChEBI" id="CHEBI:33019"/>
        <dbReference type="ChEBI" id="CHEBI:61557"/>
        <dbReference type="ChEBI" id="CHEBI:140395"/>
        <dbReference type="EC" id="2.7.7.6"/>
    </reaction>
</comment>
<comment type="similarity">
    <text evidence="1">Belongs to the RNA polymerase beta chain family.</text>
</comment>
<gene>
    <name type="primary">LEF-8</name>
    <name type="ORF">ORF54</name>
</gene>
<organismHost>
    <name type="scientific">Orgyia pseudotsugata</name>
    <name type="common">Douglas-fir tussock moth</name>
    <dbReference type="NCBI Taxonomy" id="33414"/>
</organismHost>
<evidence type="ECO:0000305" key="1"/>